<protein>
    <recommendedName>
        <fullName>Protein phosphatase 1 regulatory subunit 17</fullName>
    </recommendedName>
    <alternativeName>
        <fullName>G-substrate</fullName>
    </alternativeName>
</protein>
<reference key="1">
    <citation type="journal article" date="1999" name="J. Biol. Chem.">
        <title>Phosphorylation-dependent inhibition of protein phosphatase-1 by G-substrate: a Purkinje cell substrate of the cyclic GMP-dependent protein kinase.</title>
        <authorList>
            <person name="Hall K.U."/>
            <person name="Collins S.P."/>
            <person name="Gamm D.M."/>
            <person name="Massa E."/>
            <person name="Depaoli-Roach A.A."/>
            <person name="Uhler M.D."/>
        </authorList>
    </citation>
    <scope>NUCLEOTIDE SEQUENCE [MRNA] (ISOFORM 1)</scope>
    <scope>VARIANT VAL-12</scope>
</reference>
<reference key="2">
    <citation type="journal article" date="1999" name="Proc. Natl. Acad. Sci. U.S.A.">
        <title>Molecular identification of human G-substrate, a possible downstream component of the cGMP-dependent protein kinase cascade in cerebellar Purkinje cells.</title>
        <authorList>
            <person name="Endo S."/>
            <person name="Suzuki M."/>
            <person name="Sumi M."/>
            <person name="Nairn A.C."/>
            <person name="Morita R."/>
            <person name="Yamakawa K."/>
            <person name="Greengard P."/>
            <person name="Ito M."/>
        </authorList>
    </citation>
    <scope>NUCLEOTIDE SEQUENCE [MRNA] (ISOFORM 1)</scope>
    <scope>PHOSPHORYLATION AT THR-68 AND THR-119</scope>
    <scope>VARIANT VAL-12</scope>
    <source>
        <tissue>Brain</tissue>
    </source>
</reference>
<reference key="3">
    <citation type="journal article" date="2004" name="Nat. Genet.">
        <title>Complete sequencing and characterization of 21,243 full-length human cDNAs.</title>
        <authorList>
            <person name="Ota T."/>
            <person name="Suzuki Y."/>
            <person name="Nishikawa T."/>
            <person name="Otsuki T."/>
            <person name="Sugiyama T."/>
            <person name="Irie R."/>
            <person name="Wakamatsu A."/>
            <person name="Hayashi K."/>
            <person name="Sato H."/>
            <person name="Nagai K."/>
            <person name="Kimura K."/>
            <person name="Makita H."/>
            <person name="Sekine M."/>
            <person name="Obayashi M."/>
            <person name="Nishi T."/>
            <person name="Shibahara T."/>
            <person name="Tanaka T."/>
            <person name="Ishii S."/>
            <person name="Yamamoto J."/>
            <person name="Saito K."/>
            <person name="Kawai Y."/>
            <person name="Isono Y."/>
            <person name="Nakamura Y."/>
            <person name="Nagahari K."/>
            <person name="Murakami K."/>
            <person name="Yasuda T."/>
            <person name="Iwayanagi T."/>
            <person name="Wagatsuma M."/>
            <person name="Shiratori A."/>
            <person name="Sudo H."/>
            <person name="Hosoiri T."/>
            <person name="Kaku Y."/>
            <person name="Kodaira H."/>
            <person name="Kondo H."/>
            <person name="Sugawara M."/>
            <person name="Takahashi M."/>
            <person name="Kanda K."/>
            <person name="Yokoi T."/>
            <person name="Furuya T."/>
            <person name="Kikkawa E."/>
            <person name="Omura Y."/>
            <person name="Abe K."/>
            <person name="Kamihara K."/>
            <person name="Katsuta N."/>
            <person name="Sato K."/>
            <person name="Tanikawa M."/>
            <person name="Yamazaki M."/>
            <person name="Ninomiya K."/>
            <person name="Ishibashi T."/>
            <person name="Yamashita H."/>
            <person name="Murakawa K."/>
            <person name="Fujimori K."/>
            <person name="Tanai H."/>
            <person name="Kimata M."/>
            <person name="Watanabe M."/>
            <person name="Hiraoka S."/>
            <person name="Chiba Y."/>
            <person name="Ishida S."/>
            <person name="Ono Y."/>
            <person name="Takiguchi S."/>
            <person name="Watanabe S."/>
            <person name="Yosida M."/>
            <person name="Hotuta T."/>
            <person name="Kusano J."/>
            <person name="Kanehori K."/>
            <person name="Takahashi-Fujii A."/>
            <person name="Hara H."/>
            <person name="Tanase T.-O."/>
            <person name="Nomura Y."/>
            <person name="Togiya S."/>
            <person name="Komai F."/>
            <person name="Hara R."/>
            <person name="Takeuchi K."/>
            <person name="Arita M."/>
            <person name="Imose N."/>
            <person name="Musashino K."/>
            <person name="Yuuki H."/>
            <person name="Oshima A."/>
            <person name="Sasaki N."/>
            <person name="Aotsuka S."/>
            <person name="Yoshikawa Y."/>
            <person name="Matsunawa H."/>
            <person name="Ichihara T."/>
            <person name="Shiohata N."/>
            <person name="Sano S."/>
            <person name="Moriya S."/>
            <person name="Momiyama H."/>
            <person name="Satoh N."/>
            <person name="Takami S."/>
            <person name="Terashima Y."/>
            <person name="Suzuki O."/>
            <person name="Nakagawa S."/>
            <person name="Senoh A."/>
            <person name="Mizoguchi H."/>
            <person name="Goto Y."/>
            <person name="Shimizu F."/>
            <person name="Wakebe H."/>
            <person name="Hishigaki H."/>
            <person name="Watanabe T."/>
            <person name="Sugiyama A."/>
            <person name="Takemoto M."/>
            <person name="Kawakami B."/>
            <person name="Yamazaki M."/>
            <person name="Watanabe K."/>
            <person name="Kumagai A."/>
            <person name="Itakura S."/>
            <person name="Fukuzumi Y."/>
            <person name="Fujimori Y."/>
            <person name="Komiyama M."/>
            <person name="Tashiro H."/>
            <person name="Tanigami A."/>
            <person name="Fujiwara T."/>
            <person name="Ono T."/>
            <person name="Yamada K."/>
            <person name="Fujii Y."/>
            <person name="Ozaki K."/>
            <person name="Hirao M."/>
            <person name="Ohmori Y."/>
            <person name="Kawabata A."/>
            <person name="Hikiji T."/>
            <person name="Kobatake N."/>
            <person name="Inagaki H."/>
            <person name="Ikema Y."/>
            <person name="Okamoto S."/>
            <person name="Okitani R."/>
            <person name="Kawakami T."/>
            <person name="Noguchi S."/>
            <person name="Itoh T."/>
            <person name="Shigeta K."/>
            <person name="Senba T."/>
            <person name="Matsumura K."/>
            <person name="Nakajima Y."/>
            <person name="Mizuno T."/>
            <person name="Morinaga M."/>
            <person name="Sasaki M."/>
            <person name="Togashi T."/>
            <person name="Oyama M."/>
            <person name="Hata H."/>
            <person name="Watanabe M."/>
            <person name="Komatsu T."/>
            <person name="Mizushima-Sugano J."/>
            <person name="Satoh T."/>
            <person name="Shirai Y."/>
            <person name="Takahashi Y."/>
            <person name="Nakagawa K."/>
            <person name="Okumura K."/>
            <person name="Nagase T."/>
            <person name="Nomura N."/>
            <person name="Kikuchi H."/>
            <person name="Masuho Y."/>
            <person name="Yamashita R."/>
            <person name="Nakai K."/>
            <person name="Yada T."/>
            <person name="Nakamura Y."/>
            <person name="Ohara O."/>
            <person name="Isogai T."/>
            <person name="Sugano S."/>
        </authorList>
    </citation>
    <scope>NUCLEOTIDE SEQUENCE [LARGE SCALE MRNA] (ISOFORM 2)</scope>
    <source>
        <tissue>Cerebellum</tissue>
    </source>
</reference>
<reference key="4">
    <citation type="journal article" date="2003" name="Nature">
        <title>The DNA sequence of human chromosome 7.</title>
        <authorList>
            <person name="Hillier L.W."/>
            <person name="Fulton R.S."/>
            <person name="Fulton L.A."/>
            <person name="Graves T.A."/>
            <person name="Pepin K.H."/>
            <person name="Wagner-McPherson C."/>
            <person name="Layman D."/>
            <person name="Maas J."/>
            <person name="Jaeger S."/>
            <person name="Walker R."/>
            <person name="Wylie K."/>
            <person name="Sekhon M."/>
            <person name="Becker M.C."/>
            <person name="O'Laughlin M.D."/>
            <person name="Schaller M.E."/>
            <person name="Fewell G.A."/>
            <person name="Delehaunty K.D."/>
            <person name="Miner T.L."/>
            <person name="Nash W.E."/>
            <person name="Cordes M."/>
            <person name="Du H."/>
            <person name="Sun H."/>
            <person name="Edwards J."/>
            <person name="Bradshaw-Cordum H."/>
            <person name="Ali J."/>
            <person name="Andrews S."/>
            <person name="Isak A."/>
            <person name="Vanbrunt A."/>
            <person name="Nguyen C."/>
            <person name="Du F."/>
            <person name="Lamar B."/>
            <person name="Courtney L."/>
            <person name="Kalicki J."/>
            <person name="Ozersky P."/>
            <person name="Bielicki L."/>
            <person name="Scott K."/>
            <person name="Holmes A."/>
            <person name="Harkins R."/>
            <person name="Harris A."/>
            <person name="Strong C.M."/>
            <person name="Hou S."/>
            <person name="Tomlinson C."/>
            <person name="Dauphin-Kohlberg S."/>
            <person name="Kozlowicz-Reilly A."/>
            <person name="Leonard S."/>
            <person name="Rohlfing T."/>
            <person name="Rock S.M."/>
            <person name="Tin-Wollam A.-M."/>
            <person name="Abbott A."/>
            <person name="Minx P."/>
            <person name="Maupin R."/>
            <person name="Strowmatt C."/>
            <person name="Latreille P."/>
            <person name="Miller N."/>
            <person name="Johnson D."/>
            <person name="Murray J."/>
            <person name="Woessner J.P."/>
            <person name="Wendl M.C."/>
            <person name="Yang S.-P."/>
            <person name="Schultz B.R."/>
            <person name="Wallis J.W."/>
            <person name="Spieth J."/>
            <person name="Bieri T.A."/>
            <person name="Nelson J.O."/>
            <person name="Berkowicz N."/>
            <person name="Wohldmann P.E."/>
            <person name="Cook L.L."/>
            <person name="Hickenbotham M.T."/>
            <person name="Eldred J."/>
            <person name="Williams D."/>
            <person name="Bedell J.A."/>
            <person name="Mardis E.R."/>
            <person name="Clifton S.W."/>
            <person name="Chissoe S.L."/>
            <person name="Marra M.A."/>
            <person name="Raymond C."/>
            <person name="Haugen E."/>
            <person name="Gillett W."/>
            <person name="Zhou Y."/>
            <person name="James R."/>
            <person name="Phelps K."/>
            <person name="Iadanoto S."/>
            <person name="Bubb K."/>
            <person name="Simms E."/>
            <person name="Levy R."/>
            <person name="Clendenning J."/>
            <person name="Kaul R."/>
            <person name="Kent W.J."/>
            <person name="Furey T.S."/>
            <person name="Baertsch R.A."/>
            <person name="Brent M.R."/>
            <person name="Keibler E."/>
            <person name="Flicek P."/>
            <person name="Bork P."/>
            <person name="Suyama M."/>
            <person name="Bailey J.A."/>
            <person name="Portnoy M.E."/>
            <person name="Torrents D."/>
            <person name="Chinwalla A.T."/>
            <person name="Gish W.R."/>
            <person name="Eddy S.R."/>
            <person name="McPherson J.D."/>
            <person name="Olson M.V."/>
            <person name="Eichler E.E."/>
            <person name="Green E.D."/>
            <person name="Waterston R.H."/>
            <person name="Wilson R.K."/>
        </authorList>
    </citation>
    <scope>NUCLEOTIDE SEQUENCE [LARGE SCALE GENOMIC DNA]</scope>
</reference>
<reference key="5">
    <citation type="journal article" date="2004" name="Genome Res.">
        <title>The status, quality, and expansion of the NIH full-length cDNA project: the Mammalian Gene Collection (MGC).</title>
        <authorList>
            <consortium name="The MGC Project Team"/>
        </authorList>
    </citation>
    <scope>NUCLEOTIDE SEQUENCE [LARGE SCALE MRNA] (ISOFORM 1)</scope>
    <scope>VARIANT VAL-12</scope>
    <source>
        <tissue>Brain</tissue>
    </source>
</reference>
<evidence type="ECO:0000250" key="1"/>
<evidence type="ECO:0000256" key="2">
    <source>
        <dbReference type="SAM" id="MobiDB-lite"/>
    </source>
</evidence>
<evidence type="ECO:0000269" key="3">
    <source>
    </source>
</evidence>
<evidence type="ECO:0000269" key="4">
    <source>
    </source>
</evidence>
<evidence type="ECO:0000269" key="5">
    <source>
    </source>
</evidence>
<evidence type="ECO:0000303" key="6">
    <source>
    </source>
</evidence>
<evidence type="ECO:0000305" key="7">
    <source>
    </source>
</evidence>
<comment type="function">
    <text evidence="1">Inhibits phosphatase activities of protein phosphatase 1 (PP1) and protein phosphatase 2A (PP2A) complexes.</text>
</comment>
<comment type="alternative products">
    <event type="alternative splicing"/>
    <isoform>
        <id>O96001-1</id>
        <name>1</name>
        <sequence type="displayed"/>
    </isoform>
    <isoform>
        <id>O96001-2</id>
        <name>2</name>
        <sequence type="described" ref="VSP_042736"/>
    </isoform>
</comment>
<comment type="tissue specificity">
    <text>Highly expressed in cerebellum.</text>
</comment>
<comment type="PTM">
    <text evidence="1">Substrate for cGMP-dependent protein kinase. Phosphorylated by PRKG1 isoform alpha. Phosphorylation of Thr-68 and Thr-119 is required for its phosphatase activity (By similarity).</text>
</comment>
<comment type="PTM">
    <text>Substrate for cGMP-dependent protein kinase.</text>
</comment>
<gene>
    <name type="primary">PPP1R17</name>
    <name type="synonym">C7orf16</name>
    <name type="synonym">GSBS</name>
</gene>
<proteinExistence type="evidence at protein level"/>
<feature type="chain" id="PRO_0000083869" description="Protein phosphatase 1 regulatory subunit 17">
    <location>
        <begin position="1"/>
        <end position="155"/>
    </location>
</feature>
<feature type="region of interest" description="Disordered" evidence="2">
    <location>
        <begin position="41"/>
        <end position="73"/>
    </location>
</feature>
<feature type="compositionally biased region" description="Basic and acidic residues" evidence="2">
    <location>
        <begin position="58"/>
        <end position="69"/>
    </location>
</feature>
<feature type="modified residue" description="Phosphothreonine; by PKG/PRKG1" evidence="7">
    <location>
        <position position="68"/>
    </location>
</feature>
<feature type="modified residue" description="Phosphothreonine; by PKG/PRKG1" evidence="7">
    <location>
        <position position="119"/>
    </location>
</feature>
<feature type="splice variant" id="VSP_042736" description="In isoform 2." evidence="6">
    <location>
        <begin position="28"/>
        <end position="78"/>
    </location>
</feature>
<feature type="sequence variant" id="VAR_051025" description="In dbSNP:rs36047130.">
    <original>L</original>
    <variation>R</variation>
    <location>
        <position position="10"/>
    </location>
</feature>
<feature type="sequence variant" id="VAR_027838" description="In dbSNP:rs3735422." evidence="3 4 5">
    <original>L</original>
    <variation>V</variation>
    <location>
        <position position="12"/>
    </location>
</feature>
<accession>O96001</accession>
<accession>B4DE58</accession>
<accession>Q9UDQ0</accession>
<dbReference type="EMBL" id="AF071789">
    <property type="protein sequence ID" value="AAD12588.1"/>
    <property type="molecule type" value="mRNA"/>
</dbReference>
<dbReference type="EMBL" id="AF097730">
    <property type="protein sequence ID" value="AAD13030.1"/>
    <property type="molecule type" value="mRNA"/>
</dbReference>
<dbReference type="EMBL" id="AK293478">
    <property type="protein sequence ID" value="BAG56969.1"/>
    <property type="molecule type" value="mRNA"/>
</dbReference>
<dbReference type="EMBL" id="AC006325">
    <property type="protein sequence ID" value="AAF03537.1"/>
    <property type="molecule type" value="Genomic_DNA"/>
</dbReference>
<dbReference type="EMBL" id="BC028094">
    <property type="protein sequence ID" value="AAH28094.1"/>
    <property type="molecule type" value="mRNA"/>
</dbReference>
<dbReference type="CCDS" id="CCDS47570.1">
    <molecule id="O96001-2"/>
</dbReference>
<dbReference type="CCDS" id="CCDS5436.1">
    <molecule id="O96001-1"/>
</dbReference>
<dbReference type="RefSeq" id="NP_001138595.1">
    <molecule id="O96001-2"/>
    <property type="nucleotide sequence ID" value="NM_001145123.3"/>
</dbReference>
<dbReference type="RefSeq" id="NP_006649.2">
    <molecule id="O96001-1"/>
    <property type="nucleotide sequence ID" value="NM_006658.5"/>
</dbReference>
<dbReference type="RefSeq" id="XP_011513396.1">
    <molecule id="O96001-1"/>
    <property type="nucleotide sequence ID" value="XM_011515094.3"/>
</dbReference>
<dbReference type="RefSeq" id="XP_054213115.1">
    <molecule id="O96001-1"/>
    <property type="nucleotide sequence ID" value="XM_054357140.1"/>
</dbReference>
<dbReference type="BioGRID" id="116054">
    <property type="interactions" value="3"/>
</dbReference>
<dbReference type="FunCoup" id="O96001">
    <property type="interactions" value="58"/>
</dbReference>
<dbReference type="STRING" id="9606.ENSP00000340125"/>
<dbReference type="iPTMnet" id="O96001"/>
<dbReference type="PhosphoSitePlus" id="O96001"/>
<dbReference type="BioMuta" id="PPP1R17"/>
<dbReference type="MassIVE" id="O96001"/>
<dbReference type="PaxDb" id="9606-ENSP00000340125"/>
<dbReference type="PeptideAtlas" id="O96001"/>
<dbReference type="ProteomicsDB" id="51180">
    <molecule id="O96001-1"/>
</dbReference>
<dbReference type="Antibodypedia" id="26306">
    <property type="antibodies" value="149 antibodies from 15 providers"/>
</dbReference>
<dbReference type="DNASU" id="10842"/>
<dbReference type="Ensembl" id="ENST00000342032.8">
    <molecule id="O96001-1"/>
    <property type="protein sequence ID" value="ENSP00000340125.3"/>
    <property type="gene ID" value="ENSG00000106341.11"/>
</dbReference>
<dbReference type="Ensembl" id="ENST00000409146.3">
    <molecule id="O96001-2"/>
    <property type="protein sequence ID" value="ENSP00000386459.3"/>
    <property type="gene ID" value="ENSG00000106341.11"/>
</dbReference>
<dbReference type="GeneID" id="10842"/>
<dbReference type="KEGG" id="hsa:10842"/>
<dbReference type="MANE-Select" id="ENST00000342032.8">
    <property type="protein sequence ID" value="ENSP00000340125.3"/>
    <property type="RefSeq nucleotide sequence ID" value="NM_006658.5"/>
    <property type="RefSeq protein sequence ID" value="NP_006649.2"/>
</dbReference>
<dbReference type="UCSC" id="uc003tcl.4">
    <molecule id="O96001-1"/>
    <property type="organism name" value="human"/>
</dbReference>
<dbReference type="AGR" id="HGNC:16973"/>
<dbReference type="CTD" id="10842"/>
<dbReference type="DisGeNET" id="10842"/>
<dbReference type="GeneCards" id="PPP1R17"/>
<dbReference type="HGNC" id="HGNC:16973">
    <property type="gene designation" value="PPP1R17"/>
</dbReference>
<dbReference type="HPA" id="ENSG00000106341">
    <property type="expression patterns" value="Group enriched (adrenal gland, brain)"/>
</dbReference>
<dbReference type="MalaCards" id="PPP1R17"/>
<dbReference type="MIM" id="604088">
    <property type="type" value="gene"/>
</dbReference>
<dbReference type="neXtProt" id="NX_O96001"/>
<dbReference type="OpenTargets" id="ENSG00000106341"/>
<dbReference type="PharmGKB" id="PA134908901"/>
<dbReference type="VEuPathDB" id="HostDB:ENSG00000106341"/>
<dbReference type="eggNOG" id="ENOG502S50G">
    <property type="taxonomic scope" value="Eukaryota"/>
</dbReference>
<dbReference type="GeneTree" id="ENSGT00390000005586"/>
<dbReference type="HOGENOM" id="CLU_113768_0_0_1"/>
<dbReference type="InParanoid" id="O96001"/>
<dbReference type="OMA" id="LDPRCGH"/>
<dbReference type="OrthoDB" id="9877987at2759"/>
<dbReference type="PAN-GO" id="O96001">
    <property type="GO annotations" value="2 GO annotations based on evolutionary models"/>
</dbReference>
<dbReference type="PhylomeDB" id="O96001"/>
<dbReference type="TreeFam" id="TF335928"/>
<dbReference type="PathwayCommons" id="O96001"/>
<dbReference type="SignaLink" id="O96001"/>
<dbReference type="SIGNOR" id="O96001"/>
<dbReference type="BioGRID-ORCS" id="10842">
    <property type="hits" value="10 hits in 1147 CRISPR screens"/>
</dbReference>
<dbReference type="GeneWiki" id="C7orf16"/>
<dbReference type="GenomeRNAi" id="10842"/>
<dbReference type="Pharos" id="O96001">
    <property type="development level" value="Tbio"/>
</dbReference>
<dbReference type="PRO" id="PR:O96001"/>
<dbReference type="Proteomes" id="UP000005640">
    <property type="component" value="Chromosome 7"/>
</dbReference>
<dbReference type="RNAct" id="O96001">
    <property type="molecule type" value="protein"/>
</dbReference>
<dbReference type="Bgee" id="ENSG00000106341">
    <property type="expression patterns" value="Expressed in ganglionic eminence and 88 other cell types or tissues"/>
</dbReference>
<dbReference type="ExpressionAtlas" id="O96001">
    <property type="expression patterns" value="baseline and differential"/>
</dbReference>
<dbReference type="GO" id="GO:0004865">
    <property type="term" value="F:protein serine/threonine phosphatase inhibitor activity"/>
    <property type="evidence" value="ECO:0000318"/>
    <property type="project" value="GO_Central"/>
</dbReference>
<dbReference type="GO" id="GO:0007417">
    <property type="term" value="P:central nervous system development"/>
    <property type="evidence" value="ECO:0000303"/>
    <property type="project" value="UniProtKB"/>
</dbReference>
<dbReference type="GO" id="GO:0035556">
    <property type="term" value="P:intracellular signal transduction"/>
    <property type="evidence" value="ECO:0000303"/>
    <property type="project" value="UniProtKB"/>
</dbReference>
<dbReference type="GO" id="GO:0010921">
    <property type="term" value="P:regulation of phosphatase activity"/>
    <property type="evidence" value="ECO:0000250"/>
    <property type="project" value="UniProtKB"/>
</dbReference>
<dbReference type="InterPro" id="IPR033242">
    <property type="entry name" value="PPP1R17"/>
</dbReference>
<dbReference type="PANTHER" id="PTHR15387">
    <property type="entry name" value="PROTEIN PHOSPHATASE 1 REGULATORY SUBUNIT 17"/>
    <property type="match status" value="1"/>
</dbReference>
<dbReference type="PANTHER" id="PTHR15387:SF0">
    <property type="entry name" value="PROTEIN PHOSPHATASE 1 REGULATORY SUBUNIT 17"/>
    <property type="match status" value="1"/>
</dbReference>
<name>PPR17_HUMAN</name>
<keyword id="KW-0025">Alternative splicing</keyword>
<keyword id="KW-0597">Phosphoprotein</keyword>
<keyword id="KW-0650">Protein phosphatase inhibitor</keyword>
<keyword id="KW-1267">Proteomics identification</keyword>
<keyword id="KW-1185">Reference proteome</keyword>
<organism>
    <name type="scientific">Homo sapiens</name>
    <name type="common">Human</name>
    <dbReference type="NCBI Taxonomy" id="9606"/>
    <lineage>
        <taxon>Eukaryota</taxon>
        <taxon>Metazoa</taxon>
        <taxon>Chordata</taxon>
        <taxon>Craniata</taxon>
        <taxon>Vertebrata</taxon>
        <taxon>Euteleostomi</taxon>
        <taxon>Mammalia</taxon>
        <taxon>Eutheria</taxon>
        <taxon>Euarchontoglires</taxon>
        <taxon>Primates</taxon>
        <taxon>Haplorrhini</taxon>
        <taxon>Catarrhini</taxon>
        <taxon>Hominidae</taxon>
        <taxon>Homo</taxon>
    </lineage>
</organism>
<sequence length="155" mass="17866">MMSTEQMQPLELSEDRLDKLDPRCSHLDDLSDQFIKDCDLKKKPRKGKNVQATLNVESDQKKPRRKDTPALHIPPFIPGVFSEHLIKRYDVQERHPKGKMIPVLHNTDLEQKKPRRKDTPALHMSPFAAGVTLLRDERPKAIVEDDEKDGDKIAI</sequence>